<proteinExistence type="evidence at transcript level"/>
<organism>
    <name type="scientific">Xenopus tropicalis</name>
    <name type="common">Western clawed frog</name>
    <name type="synonym">Silurana tropicalis</name>
    <dbReference type="NCBI Taxonomy" id="8364"/>
    <lineage>
        <taxon>Eukaryota</taxon>
        <taxon>Metazoa</taxon>
        <taxon>Chordata</taxon>
        <taxon>Craniata</taxon>
        <taxon>Vertebrata</taxon>
        <taxon>Euteleostomi</taxon>
        <taxon>Amphibia</taxon>
        <taxon>Batrachia</taxon>
        <taxon>Anura</taxon>
        <taxon>Pipoidea</taxon>
        <taxon>Pipidae</taxon>
        <taxon>Xenopodinae</taxon>
        <taxon>Xenopus</taxon>
        <taxon>Silurana</taxon>
    </lineage>
</organism>
<sequence length="336" mass="36771">MLFIQDDVYKEYVKMMMNIVILCMILCISLSFWIISITASTYSGSLRPISPWRWLVSVLTPIIIVWHGIKKRSLDNSGALGGLLVGFILTIANYSFFSALLTFFFISSKLTKWKGEVKKCYDSEYKEGGQRNWVQVFCNGGLPAELALLYMIENGPGEIPIDFSKEYTASWMCLSLLGALASSAGDTWASEIGPVLSKSSPRLITTWEKVPVGTNGGVTPVGLISSLLGGTSVGVAYFVTQLIFVPDLEIAAPQWPIVIYGGMAGLLGSLIDSYLGAIMQYSGYDESTGKIVNHPTKEAKFICGKPILDNNAVNLFSSILIALLLPTAAWSFWPRL</sequence>
<gene>
    <name type="primary">tmem19</name>
</gene>
<dbReference type="EMBL" id="BC121999">
    <property type="protein sequence ID" value="AAI22000.1"/>
    <property type="molecule type" value="mRNA"/>
</dbReference>
<dbReference type="RefSeq" id="NP_001016079.1">
    <property type="nucleotide sequence ID" value="NM_001016079.3"/>
</dbReference>
<dbReference type="RefSeq" id="XP_012814445.1">
    <property type="nucleotide sequence ID" value="XM_012958991.3"/>
</dbReference>
<dbReference type="RefSeq" id="XP_031753785.1">
    <property type="nucleotide sequence ID" value="XM_031897925.1"/>
</dbReference>
<dbReference type="FunCoup" id="Q0P4L9">
    <property type="interactions" value="189"/>
</dbReference>
<dbReference type="STRING" id="8364.ENSXETP00000028213"/>
<dbReference type="DNASU" id="548833"/>
<dbReference type="GeneID" id="548833"/>
<dbReference type="KEGG" id="xtr:548833"/>
<dbReference type="AGR" id="Xenbase:XB-GENE-1013693"/>
<dbReference type="CTD" id="55266"/>
<dbReference type="Xenbase" id="XB-GENE-1013693">
    <property type="gene designation" value="tmem19"/>
</dbReference>
<dbReference type="InParanoid" id="Q0P4L9"/>
<dbReference type="OMA" id="MSSFACC"/>
<dbReference type="OrthoDB" id="30881at2759"/>
<dbReference type="Proteomes" id="UP000008143">
    <property type="component" value="Chromosome 3"/>
</dbReference>
<dbReference type="Bgee" id="ENSXETG00000011587">
    <property type="expression patterns" value="Expressed in egg cell and 12 other cell types or tissues"/>
</dbReference>
<dbReference type="ExpressionAtlas" id="Q0P4L9">
    <property type="expression patterns" value="baseline"/>
</dbReference>
<dbReference type="GO" id="GO:0016020">
    <property type="term" value="C:membrane"/>
    <property type="evidence" value="ECO:0007669"/>
    <property type="project" value="UniProtKB-SubCell"/>
</dbReference>
<dbReference type="InterPro" id="IPR002794">
    <property type="entry name" value="DUF92_TMEM19"/>
</dbReference>
<dbReference type="PANTHER" id="PTHR13353">
    <property type="entry name" value="TRANSMEMBRANE PROTEIN 19"/>
    <property type="match status" value="1"/>
</dbReference>
<dbReference type="PANTHER" id="PTHR13353:SF5">
    <property type="entry name" value="TRANSMEMBRANE PROTEIN 19"/>
    <property type="match status" value="1"/>
</dbReference>
<dbReference type="Pfam" id="PF01940">
    <property type="entry name" value="DUF92"/>
    <property type="match status" value="1"/>
</dbReference>
<comment type="subcellular location">
    <subcellularLocation>
        <location evidence="2">Membrane</location>
        <topology evidence="2">Multi-pass membrane protein</topology>
    </subcellularLocation>
</comment>
<comment type="similarity">
    <text evidence="2">Belongs to the TMEM19 family.</text>
</comment>
<feature type="chain" id="PRO_0000284799" description="Transmembrane protein 19">
    <location>
        <begin position="1"/>
        <end position="336"/>
    </location>
</feature>
<feature type="transmembrane region" description="Helical" evidence="1">
    <location>
        <begin position="19"/>
        <end position="39"/>
    </location>
</feature>
<feature type="transmembrane region" description="Helical" evidence="1">
    <location>
        <begin position="49"/>
        <end position="69"/>
    </location>
</feature>
<feature type="transmembrane region" description="Helical" evidence="1">
    <location>
        <begin position="86"/>
        <end position="106"/>
    </location>
</feature>
<feature type="transmembrane region" description="Helical" evidence="1">
    <location>
        <begin position="224"/>
        <end position="244"/>
    </location>
</feature>
<feature type="transmembrane region" description="Helical" evidence="1">
    <location>
        <begin position="250"/>
        <end position="270"/>
    </location>
</feature>
<feature type="transmembrane region" description="Helical" evidence="1">
    <location>
        <begin position="313"/>
        <end position="333"/>
    </location>
</feature>
<evidence type="ECO:0000255" key="1"/>
<evidence type="ECO:0000305" key="2"/>
<accession>Q0P4L9</accession>
<keyword id="KW-0472">Membrane</keyword>
<keyword id="KW-1185">Reference proteome</keyword>
<keyword id="KW-0812">Transmembrane</keyword>
<keyword id="KW-1133">Transmembrane helix</keyword>
<protein>
    <recommendedName>
        <fullName>Transmembrane protein 19</fullName>
    </recommendedName>
</protein>
<reference key="1">
    <citation type="submission" date="2006-08" db="EMBL/GenBank/DDBJ databases">
        <authorList>
            <consortium name="NIH - Xenopus Gene Collection (XGC) project"/>
        </authorList>
    </citation>
    <scope>NUCLEOTIDE SEQUENCE [LARGE SCALE MRNA]</scope>
    <source>
        <strain>N6</strain>
        <tissue>Oviduct</tissue>
    </source>
</reference>
<name>TMM19_XENTR</name>